<reference key="1">
    <citation type="journal article" date="2001" name="J. Bacteriol.">
        <title>Genome sequence and comparative analysis of the solvent-producing bacterium Clostridium acetobutylicum.</title>
        <authorList>
            <person name="Noelling J."/>
            <person name="Breton G."/>
            <person name="Omelchenko M.V."/>
            <person name="Makarova K.S."/>
            <person name="Zeng Q."/>
            <person name="Gibson R."/>
            <person name="Lee H.M."/>
            <person name="Dubois J."/>
            <person name="Qiu D."/>
            <person name="Hitti J."/>
            <person name="Wolf Y.I."/>
            <person name="Tatusov R.L."/>
            <person name="Sabathe F."/>
            <person name="Doucette-Stamm L.A."/>
            <person name="Soucaille P."/>
            <person name="Daly M.J."/>
            <person name="Bennett G.N."/>
            <person name="Koonin E.V."/>
            <person name="Smith D.R."/>
        </authorList>
    </citation>
    <scope>NUCLEOTIDE SEQUENCE [LARGE SCALE GENOMIC DNA]</scope>
    <source>
        <strain>ATCC 824 / DSM 792 / JCM 1419 / IAM 19013 / LMG 5710 / NBRC 13948 / NRRL B-527 / VKM B-1787 / 2291 / W</strain>
    </source>
</reference>
<gene>
    <name type="ordered locus">CA_C0948</name>
</gene>
<organism>
    <name type="scientific">Clostridium acetobutylicum (strain ATCC 824 / DSM 792 / JCM 1419 / IAM 19013 / LMG 5710 / NBRC 13948 / NRRL B-527 / VKM B-1787 / 2291 / W)</name>
    <dbReference type="NCBI Taxonomy" id="272562"/>
    <lineage>
        <taxon>Bacteria</taxon>
        <taxon>Bacillati</taxon>
        <taxon>Bacillota</taxon>
        <taxon>Clostridia</taxon>
        <taxon>Eubacteriales</taxon>
        <taxon>Clostridiaceae</taxon>
        <taxon>Clostridium</taxon>
    </lineage>
</organism>
<sequence>MEKIAIITDTTADLTEEFIKENDINVLSFRIIYKDKEYKDKVDITSEEVYRNFEIEVPKSSMPSLQDMEDLYKKLEEEGYTHAIGITLSSGLSGIFNGLKMIADEHSKIKSFIYDSKLISLGEGALVEECSKMIHNNKSFDEIVKAIPEIRKKIHLFFVVGTLDYLKKGGRIGKIAGTIGKLLNIKPIVSVDDNGVYYAYDKVRGRKQSLNRVMEIAKDITKNSKCRAYVMHGDAEKESKEFFKKVKELPNINNAFYNGCISPVSGVHSGPGLVGLVLLEE</sequence>
<dbReference type="EMBL" id="AE001437">
    <property type="protein sequence ID" value="AAK78924.1"/>
    <property type="molecule type" value="Genomic_DNA"/>
</dbReference>
<dbReference type="PIR" id="A97017">
    <property type="entry name" value="A97017"/>
</dbReference>
<dbReference type="RefSeq" id="NP_347584.1">
    <property type="nucleotide sequence ID" value="NC_003030.1"/>
</dbReference>
<dbReference type="RefSeq" id="WP_010964266.1">
    <property type="nucleotide sequence ID" value="NC_003030.1"/>
</dbReference>
<dbReference type="SMR" id="Q97KH1"/>
<dbReference type="STRING" id="272562.CA_C0948"/>
<dbReference type="KEGG" id="cac:CA_C0948"/>
<dbReference type="PATRIC" id="fig|272562.8.peg.1158"/>
<dbReference type="eggNOG" id="COG1307">
    <property type="taxonomic scope" value="Bacteria"/>
</dbReference>
<dbReference type="HOGENOM" id="CLU_048251_4_3_9"/>
<dbReference type="OrthoDB" id="9781230at2"/>
<dbReference type="Proteomes" id="UP000000814">
    <property type="component" value="Chromosome"/>
</dbReference>
<dbReference type="GO" id="GO:0008289">
    <property type="term" value="F:lipid binding"/>
    <property type="evidence" value="ECO:0007669"/>
    <property type="project" value="UniProtKB-KW"/>
</dbReference>
<dbReference type="Gene3D" id="3.30.1180.10">
    <property type="match status" value="1"/>
</dbReference>
<dbReference type="Gene3D" id="3.40.50.10170">
    <property type="match status" value="1"/>
</dbReference>
<dbReference type="InterPro" id="IPR003797">
    <property type="entry name" value="DegV"/>
</dbReference>
<dbReference type="InterPro" id="IPR043168">
    <property type="entry name" value="DegV_C"/>
</dbReference>
<dbReference type="InterPro" id="IPR050270">
    <property type="entry name" value="DegV_domain_contain"/>
</dbReference>
<dbReference type="NCBIfam" id="TIGR00762">
    <property type="entry name" value="DegV"/>
    <property type="match status" value="1"/>
</dbReference>
<dbReference type="PANTHER" id="PTHR33434">
    <property type="entry name" value="DEGV DOMAIN-CONTAINING PROTEIN DR_1986-RELATED"/>
    <property type="match status" value="1"/>
</dbReference>
<dbReference type="PANTHER" id="PTHR33434:SF3">
    <property type="entry name" value="DEGV DOMAIN-CONTAINING PROTEIN YITS"/>
    <property type="match status" value="1"/>
</dbReference>
<dbReference type="Pfam" id="PF02645">
    <property type="entry name" value="DegV"/>
    <property type="match status" value="1"/>
</dbReference>
<dbReference type="SUPFAM" id="SSF82549">
    <property type="entry name" value="DAK1/DegV-like"/>
    <property type="match status" value="1"/>
</dbReference>
<dbReference type="PROSITE" id="PS51482">
    <property type="entry name" value="DEGV"/>
    <property type="match status" value="1"/>
</dbReference>
<feature type="chain" id="PRO_0000209754" description="DegV domain-containing protein CA_C0948">
    <location>
        <begin position="1"/>
        <end position="281"/>
    </location>
</feature>
<feature type="domain" description="DegV" evidence="3">
    <location>
        <begin position="4"/>
        <end position="280"/>
    </location>
</feature>
<feature type="binding site" evidence="2">
    <location>
        <position position="60"/>
    </location>
    <ligand>
        <name>hexadecanoate</name>
        <dbReference type="ChEBI" id="CHEBI:7896"/>
    </ligand>
</feature>
<feature type="binding site" evidence="2">
    <location>
        <position position="93"/>
    </location>
    <ligand>
        <name>hexadecanoate</name>
        <dbReference type="ChEBI" id="CHEBI:7896"/>
    </ligand>
</feature>
<accession>Q97KH1</accession>
<evidence type="ECO:0000250" key="1"/>
<evidence type="ECO:0000250" key="2">
    <source>
        <dbReference type="UniProtKB" id="Q9X1H9"/>
    </source>
</evidence>
<evidence type="ECO:0000255" key="3">
    <source>
        <dbReference type="PROSITE-ProRule" id="PRU00815"/>
    </source>
</evidence>
<protein>
    <recommendedName>
        <fullName>DegV domain-containing protein CA_C0948</fullName>
    </recommendedName>
</protein>
<proteinExistence type="inferred from homology"/>
<name>Y948_CLOAB</name>
<keyword id="KW-0446">Lipid-binding</keyword>
<keyword id="KW-1185">Reference proteome</keyword>
<comment type="function">
    <text evidence="1">May bind long-chain fatty acids, such as palmitate, and may play a role in lipid transport or fatty acid metabolism.</text>
</comment>